<accession>Q9M4X7</accession>
<accession>Q0DS33</accession>
<accession>Q10LS8</accession>
<organism>
    <name type="scientific">Oryza sativa subsp. japonica</name>
    <name type="common">Rice</name>
    <dbReference type="NCBI Taxonomy" id="39947"/>
    <lineage>
        <taxon>Eukaryota</taxon>
        <taxon>Viridiplantae</taxon>
        <taxon>Streptophyta</taxon>
        <taxon>Embryophyta</taxon>
        <taxon>Tracheophyta</taxon>
        <taxon>Spermatophyta</taxon>
        <taxon>Magnoliopsida</taxon>
        <taxon>Liliopsida</taxon>
        <taxon>Poales</taxon>
        <taxon>Poaceae</taxon>
        <taxon>BOP clade</taxon>
        <taxon>Oryzoideae</taxon>
        <taxon>Oryzeae</taxon>
        <taxon>Oryzinae</taxon>
        <taxon>Oryza</taxon>
        <taxon>Oryza sativa</taxon>
    </lineage>
</organism>
<reference key="1">
    <citation type="journal article" date="2002" name="Plant Physiol.">
        <title>Expression of alpha-expansin and expansin-like genes in deepwater rice.</title>
        <authorList>
            <person name="Lee Y."/>
            <person name="Kende H."/>
        </authorList>
    </citation>
    <scope>NUCLEOTIDE SEQUENCE [MRNA]</scope>
    <scope>DEVELOPMENTAL STAGE</scope>
    <scope>INDUCTION</scope>
</reference>
<reference key="2">
    <citation type="journal article" date="2005" name="Genome Res.">
        <title>Sequence, annotation, and analysis of synteny between rice chromosome 3 and diverged grass species.</title>
        <authorList>
            <consortium name="The rice chromosome 3 sequencing consortium"/>
            <person name="Buell C.R."/>
            <person name="Yuan Q."/>
            <person name="Ouyang S."/>
            <person name="Liu J."/>
            <person name="Zhu W."/>
            <person name="Wang A."/>
            <person name="Maiti R."/>
            <person name="Haas B."/>
            <person name="Wortman J."/>
            <person name="Pertea M."/>
            <person name="Jones K.M."/>
            <person name="Kim M."/>
            <person name="Overton L."/>
            <person name="Tsitrin T."/>
            <person name="Fadrosh D."/>
            <person name="Bera J."/>
            <person name="Weaver B."/>
            <person name="Jin S."/>
            <person name="Johri S."/>
            <person name="Reardon M."/>
            <person name="Webb K."/>
            <person name="Hill J."/>
            <person name="Moffat K."/>
            <person name="Tallon L."/>
            <person name="Van Aken S."/>
            <person name="Lewis M."/>
            <person name="Utterback T."/>
            <person name="Feldblyum T."/>
            <person name="Zismann V."/>
            <person name="Iobst S."/>
            <person name="Hsiao J."/>
            <person name="de Vazeille A.R."/>
            <person name="Salzberg S.L."/>
            <person name="White O."/>
            <person name="Fraser C.M."/>
            <person name="Yu Y."/>
            <person name="Kim H."/>
            <person name="Rambo T."/>
            <person name="Currie J."/>
            <person name="Collura K."/>
            <person name="Kernodle-Thompson S."/>
            <person name="Wei F."/>
            <person name="Kudrna K."/>
            <person name="Ammiraju J.S.S."/>
            <person name="Luo M."/>
            <person name="Goicoechea J.L."/>
            <person name="Wing R.A."/>
            <person name="Henry D."/>
            <person name="Oates R."/>
            <person name="Palmer M."/>
            <person name="Pries G."/>
            <person name="Saski C."/>
            <person name="Simmons J."/>
            <person name="Soderlund C."/>
            <person name="Nelson W."/>
            <person name="de la Bastide M."/>
            <person name="Spiegel L."/>
            <person name="Nascimento L."/>
            <person name="Huang E."/>
            <person name="Preston R."/>
            <person name="Zutavern T."/>
            <person name="Palmer L."/>
            <person name="O'Shaughnessy A."/>
            <person name="Dike S."/>
            <person name="McCombie W.R."/>
            <person name="Minx P."/>
            <person name="Cordum H."/>
            <person name="Wilson R."/>
            <person name="Jin W."/>
            <person name="Lee H.R."/>
            <person name="Jiang J."/>
            <person name="Jackson S."/>
        </authorList>
    </citation>
    <scope>NUCLEOTIDE SEQUENCE [LARGE SCALE GENOMIC DNA]</scope>
    <source>
        <strain>cv. Nipponbare</strain>
    </source>
</reference>
<reference key="3">
    <citation type="journal article" date="2005" name="Nature">
        <title>The map-based sequence of the rice genome.</title>
        <authorList>
            <consortium name="International rice genome sequencing project (IRGSP)"/>
        </authorList>
    </citation>
    <scope>NUCLEOTIDE SEQUENCE [LARGE SCALE GENOMIC DNA]</scope>
    <source>
        <strain>cv. Nipponbare</strain>
    </source>
</reference>
<reference key="4">
    <citation type="journal article" date="2008" name="Nucleic Acids Res.">
        <title>The rice annotation project database (RAP-DB): 2008 update.</title>
        <authorList>
            <consortium name="The rice annotation project (RAP)"/>
        </authorList>
    </citation>
    <scope>GENOME REANNOTATION</scope>
    <source>
        <strain>cv. Nipponbare</strain>
    </source>
</reference>
<reference key="5">
    <citation type="journal article" date="2013" name="Rice">
        <title>Improvement of the Oryza sativa Nipponbare reference genome using next generation sequence and optical map data.</title>
        <authorList>
            <person name="Kawahara Y."/>
            <person name="de la Bastide M."/>
            <person name="Hamilton J.P."/>
            <person name="Kanamori H."/>
            <person name="McCombie W.R."/>
            <person name="Ouyang S."/>
            <person name="Schwartz D.C."/>
            <person name="Tanaka T."/>
            <person name="Wu J."/>
            <person name="Zhou S."/>
            <person name="Childs K.L."/>
            <person name="Davidson R.M."/>
            <person name="Lin H."/>
            <person name="Quesada-Ocampo L."/>
            <person name="Vaillancourt B."/>
            <person name="Sakai H."/>
            <person name="Lee S.S."/>
            <person name="Kim J."/>
            <person name="Numa H."/>
            <person name="Itoh T."/>
            <person name="Buell C.R."/>
            <person name="Matsumoto T."/>
        </authorList>
    </citation>
    <scope>GENOME REANNOTATION</scope>
    <source>
        <strain>cv. Nipponbare</strain>
    </source>
</reference>
<reference key="6">
    <citation type="journal article" date="2003" name="Science">
        <title>Collection, mapping, and annotation of over 28,000 cDNA clones from japonica rice.</title>
        <authorList>
            <consortium name="The rice full-length cDNA consortium"/>
        </authorList>
    </citation>
    <scope>NUCLEOTIDE SEQUENCE [LARGE SCALE MRNA]</scope>
    <source>
        <strain>cv. Nipponbare</strain>
    </source>
</reference>
<reference key="7">
    <citation type="journal article" date="2004" name="Plant Mol. Biol.">
        <title>Nomenclature for members of the expansin superfamily of genes and proteins.</title>
        <authorList>
            <person name="Kende H."/>
            <person name="Bradford K.J."/>
            <person name="Brummell D.A."/>
            <person name="Cho H.-T."/>
            <person name="Cosgrove D.J."/>
            <person name="Fleming A.J."/>
            <person name="Gehring C."/>
            <person name="Lee Y."/>
            <person name="McQueen-Mason S.J."/>
            <person name="Rose J.K.C."/>
            <person name="Voesenek L.A.C."/>
        </authorList>
    </citation>
    <scope>NOMENCLATURE</scope>
</reference>
<reference key="8">
    <citation type="journal article" date="2005" name="Mol. Cells">
        <title>Characterization and transcriptional expression of the alpha-expansin gene family in rice.</title>
        <authorList>
            <person name="Shin J.-H."/>
            <person name="Jeong D.-H."/>
            <person name="Park M.C."/>
            <person name="An G."/>
        </authorList>
    </citation>
    <scope>TISSUE SPECIFICITY</scope>
</reference>
<keyword id="KW-0134">Cell wall</keyword>
<keyword id="KW-0961">Cell wall biogenesis/degradation</keyword>
<keyword id="KW-1015">Disulfide bond</keyword>
<keyword id="KW-0472">Membrane</keyword>
<keyword id="KW-1185">Reference proteome</keyword>
<keyword id="KW-0964">Secreted</keyword>
<keyword id="KW-0732">Signal</keyword>
<name>EXPA6_ORYSJ</name>
<gene>
    <name type="primary">EXPA6</name>
    <name type="synonym">EXP6</name>
    <name type="ordered locus">Os03g0336400</name>
    <name type="ordered locus">LOC_Os03g21820</name>
</gene>
<sequence length="259" mass="27138">MAPPLLLLLASLLLVAARRALGLGLGQWQPGHATFYGGGDASGTMGGACGYGNLYSQGYGTSTAALSTALFNRGLSCGSCYELRCAGDHRRSCLPGGATVTVTATNFCPPNYALPSDGGGWCNPPRRHFDLAEPAFLRIARHAAGIVPVSFRRVACARKGGVRFTVNGHAYFNLVLVTNVGGAGDVRSLAVKGSGSGSRVGGRWQPMSRNWGQNWQSNAYLDGKALSFRVTAGDGRSLTCADVAPAGWQFGQTFEGRQF</sequence>
<dbReference type="EMBL" id="AF247163">
    <property type="protein sequence ID" value="AAF62181.1"/>
    <property type="molecule type" value="mRNA"/>
</dbReference>
<dbReference type="EMBL" id="DP000009">
    <property type="protein sequence ID" value="ABF95820.1"/>
    <property type="molecule type" value="Genomic_DNA"/>
</dbReference>
<dbReference type="EMBL" id="AP008209">
    <property type="protein sequence ID" value="BAF11955.1"/>
    <property type="molecule type" value="Genomic_DNA"/>
</dbReference>
<dbReference type="EMBL" id="AP014959">
    <property type="protein sequence ID" value="BAS84085.1"/>
    <property type="molecule type" value="Genomic_DNA"/>
</dbReference>
<dbReference type="EMBL" id="AK107698">
    <property type="protein sequence ID" value="BAG98126.1"/>
    <property type="molecule type" value="mRNA"/>
</dbReference>
<dbReference type="RefSeq" id="XP_015629257.1">
    <property type="nucleotide sequence ID" value="XM_015773771.1"/>
</dbReference>
<dbReference type="SMR" id="Q9M4X7"/>
<dbReference type="FunCoup" id="Q9M4X7">
    <property type="interactions" value="3"/>
</dbReference>
<dbReference type="STRING" id="39947.Q9M4X7"/>
<dbReference type="PaxDb" id="39947-Q9M4X7"/>
<dbReference type="EnsemblPlants" id="Os03t0336400-01">
    <property type="protein sequence ID" value="Os03t0336400-01"/>
    <property type="gene ID" value="Os03g0336400"/>
</dbReference>
<dbReference type="Gramene" id="Os03t0336400-01">
    <property type="protein sequence ID" value="Os03t0336400-01"/>
    <property type="gene ID" value="Os03g0336400"/>
</dbReference>
<dbReference type="KEGG" id="dosa:Os03g0336400"/>
<dbReference type="eggNOG" id="ENOG502QUZN">
    <property type="taxonomic scope" value="Eukaryota"/>
</dbReference>
<dbReference type="HOGENOM" id="CLU_027462_0_1_1"/>
<dbReference type="InParanoid" id="Q9M4X7"/>
<dbReference type="OMA" id="ANADHRW"/>
<dbReference type="OrthoDB" id="5823761at2759"/>
<dbReference type="Proteomes" id="UP000000763">
    <property type="component" value="Chromosome 3"/>
</dbReference>
<dbReference type="Proteomes" id="UP000059680">
    <property type="component" value="Chromosome 3"/>
</dbReference>
<dbReference type="GO" id="GO:0005576">
    <property type="term" value="C:extracellular region"/>
    <property type="evidence" value="ECO:0007669"/>
    <property type="project" value="UniProtKB-KW"/>
</dbReference>
<dbReference type="GO" id="GO:0016020">
    <property type="term" value="C:membrane"/>
    <property type="evidence" value="ECO:0007669"/>
    <property type="project" value="UniProtKB-SubCell"/>
</dbReference>
<dbReference type="GO" id="GO:0009828">
    <property type="term" value="P:plant-type cell wall loosening"/>
    <property type="evidence" value="ECO:0000250"/>
    <property type="project" value="UniProtKB"/>
</dbReference>
<dbReference type="CDD" id="cd22274">
    <property type="entry name" value="DPBB_EXPA_N"/>
    <property type="match status" value="1"/>
</dbReference>
<dbReference type="FunFam" id="2.40.40.10:FF:000001">
    <property type="entry name" value="Expansin"/>
    <property type="match status" value="1"/>
</dbReference>
<dbReference type="FunFam" id="2.60.40.760:FF:000001">
    <property type="entry name" value="Expansin"/>
    <property type="match status" value="1"/>
</dbReference>
<dbReference type="Gene3D" id="2.60.40.760">
    <property type="entry name" value="Expansin, cellulose-binding-like domain"/>
    <property type="match status" value="1"/>
</dbReference>
<dbReference type="Gene3D" id="2.40.40.10">
    <property type="entry name" value="RlpA-like domain"/>
    <property type="match status" value="1"/>
</dbReference>
<dbReference type="InterPro" id="IPR007118">
    <property type="entry name" value="Expan_Lol_pI"/>
</dbReference>
<dbReference type="InterPro" id="IPR002963">
    <property type="entry name" value="Expansin"/>
</dbReference>
<dbReference type="InterPro" id="IPR007112">
    <property type="entry name" value="Expansin/allergen_DPBB_dom"/>
</dbReference>
<dbReference type="InterPro" id="IPR007117">
    <property type="entry name" value="Expansin_CBD"/>
</dbReference>
<dbReference type="InterPro" id="IPR036749">
    <property type="entry name" value="Expansin_CBD_sf"/>
</dbReference>
<dbReference type="InterPro" id="IPR009009">
    <property type="entry name" value="RlpA-like_DPBB"/>
</dbReference>
<dbReference type="InterPro" id="IPR036908">
    <property type="entry name" value="RlpA-like_sf"/>
</dbReference>
<dbReference type="PANTHER" id="PTHR31867">
    <property type="entry name" value="EXPANSIN-A15"/>
    <property type="match status" value="1"/>
</dbReference>
<dbReference type="Pfam" id="PF03330">
    <property type="entry name" value="DPBB_1"/>
    <property type="match status" value="1"/>
</dbReference>
<dbReference type="Pfam" id="PF01357">
    <property type="entry name" value="Expansin_C"/>
    <property type="match status" value="1"/>
</dbReference>
<dbReference type="PRINTS" id="PR01226">
    <property type="entry name" value="EXPANSIN"/>
</dbReference>
<dbReference type="PRINTS" id="PR01225">
    <property type="entry name" value="EXPANSNFAMLY"/>
</dbReference>
<dbReference type="SMART" id="SM00837">
    <property type="entry name" value="DPBB_1"/>
    <property type="match status" value="1"/>
</dbReference>
<dbReference type="SUPFAM" id="SSF50685">
    <property type="entry name" value="Barwin-like endoglucanases"/>
    <property type="match status" value="1"/>
</dbReference>
<dbReference type="SUPFAM" id="SSF49590">
    <property type="entry name" value="PHL pollen allergen"/>
    <property type="match status" value="1"/>
</dbReference>
<dbReference type="PROSITE" id="PS50843">
    <property type="entry name" value="EXPANSIN_CBD"/>
    <property type="match status" value="1"/>
</dbReference>
<dbReference type="PROSITE" id="PS50842">
    <property type="entry name" value="EXPANSIN_EG45"/>
    <property type="match status" value="1"/>
</dbReference>
<feature type="signal peptide" evidence="2">
    <location>
        <begin position="1"/>
        <end position="22"/>
    </location>
</feature>
<feature type="chain" id="PRO_0000251985" description="Expansin-A6">
    <location>
        <begin position="23"/>
        <end position="259"/>
    </location>
</feature>
<feature type="domain" description="Expansin-like EG45" evidence="4">
    <location>
        <begin position="46"/>
        <end position="161"/>
    </location>
</feature>
<feature type="domain" description="Expansin-like CBD" evidence="3">
    <location>
        <begin position="171"/>
        <end position="256"/>
    </location>
</feature>
<feature type="disulfide bond" evidence="4">
    <location>
        <begin position="49"/>
        <end position="77"/>
    </location>
</feature>
<feature type="disulfide bond" evidence="4">
    <location>
        <begin position="80"/>
        <end position="156"/>
    </location>
</feature>
<feature type="disulfide bond" evidence="4">
    <location>
        <begin position="85"/>
        <end position="93"/>
    </location>
</feature>
<evidence type="ECO:0000250" key="1"/>
<evidence type="ECO:0000255" key="2"/>
<evidence type="ECO:0000255" key="3">
    <source>
        <dbReference type="PROSITE-ProRule" id="PRU00078"/>
    </source>
</evidence>
<evidence type="ECO:0000255" key="4">
    <source>
        <dbReference type="PROSITE-ProRule" id="PRU00079"/>
    </source>
</evidence>
<evidence type="ECO:0000269" key="5">
    <source>
    </source>
</evidence>
<evidence type="ECO:0000269" key="6">
    <source>
    </source>
</evidence>
<evidence type="ECO:0000305" key="7"/>
<protein>
    <recommendedName>
        <fullName>Expansin-A6</fullName>
    </recommendedName>
    <alternativeName>
        <fullName>Alpha-expansin-6</fullName>
    </alternativeName>
    <alternativeName>
        <fullName>OsEXP6</fullName>
    </alternativeName>
    <alternativeName>
        <fullName>OsEXPA6</fullName>
    </alternativeName>
    <alternativeName>
        <fullName>OsaEXPa1.24</fullName>
    </alternativeName>
</protein>
<proteinExistence type="evidence at transcript level"/>
<comment type="function">
    <text evidence="1">May cause loosening and extension of plant cell walls by disrupting non-covalent bonding between cellulose microfibrils and matrix glucans. No enzymatic activity has been found. May be required for rapid internodal elongation in deepwater rice during submergence (By similarity).</text>
</comment>
<comment type="subcellular location">
    <subcellularLocation>
        <location evidence="1">Secreted</location>
        <location evidence="1">Cell wall</location>
    </subcellularLocation>
    <subcellularLocation>
        <location evidence="1">Membrane</location>
        <topology evidence="1">Peripheral membrane protein</topology>
    </subcellularLocation>
</comment>
<comment type="tissue specificity">
    <text evidence="6">Expressed in panicles and flowers.</text>
</comment>
<comment type="developmental stage">
    <text evidence="5">Expressed in the growing regions of coleoptiles, internodes and leaves.</text>
</comment>
<comment type="induction">
    <text evidence="5">By gibberellin (GA3) and wounding.</text>
</comment>
<comment type="similarity">
    <text evidence="7">Belongs to the expansin family. Expansin A subfamily.</text>
</comment>
<comment type="online information" name="EXPANSIN homepage">
    <link uri="https://www.dept.psu.edu/biology/groups/expansins/index.htm"/>
</comment>